<comment type="function">
    <text evidence="2">Binds to the subunit GPIbalpha (GP1BA) of the platelet GPIb/V/IX receptor system. It inhibits ristocetin- and vWF-induced platelet aggregation in platelet-rich plasma by inhibiting the binding of vWF to GPIbalpha.</text>
</comment>
<comment type="subunit">
    <text evidence="2">Heterodimer of subunits alpha and beta; disulfide-linked.</text>
</comment>
<comment type="subcellular location">
    <subcellularLocation>
        <location evidence="2">Secreted</location>
    </subcellularLocation>
</comment>
<comment type="tissue specificity">
    <text evidence="2">Expressed by the venom gland.</text>
</comment>
<comment type="similarity">
    <text evidence="3">Belongs to the snaclec family.</text>
</comment>
<organism>
    <name type="scientific">Crotalus horridus</name>
    <name type="common">Timber rattlesnake</name>
    <dbReference type="NCBI Taxonomy" id="35024"/>
    <lineage>
        <taxon>Eukaryota</taxon>
        <taxon>Metazoa</taxon>
        <taxon>Chordata</taxon>
        <taxon>Craniata</taxon>
        <taxon>Vertebrata</taxon>
        <taxon>Euteleostomi</taxon>
        <taxon>Lepidosauria</taxon>
        <taxon>Squamata</taxon>
        <taxon>Bifurcata</taxon>
        <taxon>Unidentata</taxon>
        <taxon>Episquamata</taxon>
        <taxon>Toxicofera</taxon>
        <taxon>Serpentes</taxon>
        <taxon>Colubroidea</taxon>
        <taxon>Viperidae</taxon>
        <taxon>Crotalinae</taxon>
        <taxon>Crotalus</taxon>
    </lineage>
</organism>
<feature type="chain" id="PRO_0000046699" description="Snaclec CHH-B subunit alpha">
    <location>
        <begin position="1"/>
        <end position="127"/>
    </location>
</feature>
<feature type="domain" description="C-type lectin" evidence="1">
    <location>
        <begin position="11"/>
        <end position="121"/>
    </location>
</feature>
<feature type="disulfide bond" evidence="1">
    <location>
        <begin position="4"/>
        <end position="15"/>
    </location>
</feature>
<feature type="disulfide bond" evidence="1">
    <location>
        <begin position="32"/>
        <end position="120"/>
    </location>
</feature>
<feature type="disulfide bond" description="Interchain" evidence="1">
    <location>
        <position position="81"/>
    </location>
</feature>
<feature type="disulfide bond" evidence="1">
    <location>
        <begin position="95"/>
        <end position="112"/>
    </location>
</feature>
<evidence type="ECO:0000255" key="1">
    <source>
        <dbReference type="PROSITE-ProRule" id="PRU00040"/>
    </source>
</evidence>
<evidence type="ECO:0000269" key="2">
    <source>
    </source>
</evidence>
<evidence type="ECO:0000305" key="3"/>
<accession>P81508</accession>
<sequence length="127" mass="15162">DLECPSGWSSYDRYCYKPFKQEMTWADAERFCSEQAKGRHLLSVETALEASFVDNVLYANKEYLTRYIWIGLRVQNKGQPCSSIYSENLVDPFDCFMVSRDTRLREWFKVDCEQQHSFICKFTRPRR</sequence>
<protein>
    <recommendedName>
        <fullName>Snaclec CHH-B subunit alpha</fullName>
    </recommendedName>
</protein>
<name>SLA_CROHD</name>
<dbReference type="SMR" id="P81508"/>
<dbReference type="GO" id="GO:0005576">
    <property type="term" value="C:extracellular region"/>
    <property type="evidence" value="ECO:0000314"/>
    <property type="project" value="UniProtKB"/>
</dbReference>
<dbReference type="GO" id="GO:0090729">
    <property type="term" value="F:toxin activity"/>
    <property type="evidence" value="ECO:0007669"/>
    <property type="project" value="UniProtKB-KW"/>
</dbReference>
<dbReference type="GO" id="GO:0044477">
    <property type="term" value="P:venom-mediated suppression of platelet aggregation"/>
    <property type="evidence" value="ECO:0000314"/>
    <property type="project" value="UniProtKB"/>
</dbReference>
<dbReference type="FunFam" id="3.10.100.10:FF:000087">
    <property type="entry name" value="Snaclec rhodocetin subunit delta"/>
    <property type="match status" value="1"/>
</dbReference>
<dbReference type="Gene3D" id="3.10.100.10">
    <property type="entry name" value="Mannose-Binding Protein A, subunit A"/>
    <property type="match status" value="1"/>
</dbReference>
<dbReference type="InterPro" id="IPR001304">
    <property type="entry name" value="C-type_lectin-like"/>
</dbReference>
<dbReference type="InterPro" id="IPR016186">
    <property type="entry name" value="C-type_lectin-like/link_sf"/>
</dbReference>
<dbReference type="InterPro" id="IPR050111">
    <property type="entry name" value="C-type_lectin/snaclec_domain"/>
</dbReference>
<dbReference type="InterPro" id="IPR016187">
    <property type="entry name" value="CTDL_fold"/>
</dbReference>
<dbReference type="PANTHER" id="PTHR22803">
    <property type="entry name" value="MANNOSE, PHOSPHOLIPASE, LECTIN RECEPTOR RELATED"/>
    <property type="match status" value="1"/>
</dbReference>
<dbReference type="Pfam" id="PF00059">
    <property type="entry name" value="Lectin_C"/>
    <property type="match status" value="1"/>
</dbReference>
<dbReference type="SMART" id="SM00034">
    <property type="entry name" value="CLECT"/>
    <property type="match status" value="1"/>
</dbReference>
<dbReference type="SUPFAM" id="SSF56436">
    <property type="entry name" value="C-type lectin-like"/>
    <property type="match status" value="1"/>
</dbReference>
<dbReference type="PROSITE" id="PS50041">
    <property type="entry name" value="C_TYPE_LECTIN_2"/>
    <property type="match status" value="1"/>
</dbReference>
<keyword id="KW-0903">Direct protein sequencing</keyword>
<keyword id="KW-1015">Disulfide bond</keyword>
<keyword id="KW-1199">Hemostasis impairing toxin</keyword>
<keyword id="KW-1201">Platelet aggregation inhibiting toxin</keyword>
<keyword id="KW-0964">Secreted</keyword>
<keyword id="KW-0800">Toxin</keyword>
<proteinExistence type="evidence at protein level"/>
<reference key="1">
    <citation type="journal article" date="1996" name="Biochemistry">
        <title>Binding of a novel 50-kilodalton alboaggregin from Trimeresurus albolabris and related viper venom proteins to the platelet membrane glycoprotein Ib-IX-V complex. Effect on platelet aggregation and glycoprotein Ib-mediated platelet activation.</title>
        <authorList>
            <person name="Andrews R.K."/>
            <person name="Kroll M.H."/>
            <person name="Ward C.M."/>
            <person name="Rose J.W."/>
            <person name="Scarborough R.M."/>
            <person name="Smith A.I."/>
            <person name="Lopez J.A."/>
            <person name="Berndt M.C."/>
        </authorList>
    </citation>
    <scope>PROTEIN SEQUENCE</scope>
    <scope>FUNCTION</scope>
    <scope>SUBUNIT</scope>
    <scope>SUBCELLULAR LOCATION</scope>
    <scope>TISSUE SPECIFICITY</scope>
    <source>
        <tissue>Venom</tissue>
    </source>
</reference>